<proteinExistence type="inferred from homology"/>
<evidence type="ECO:0000255" key="1">
    <source>
        <dbReference type="HAMAP-Rule" id="MF_00189"/>
    </source>
</evidence>
<protein>
    <recommendedName>
        <fullName evidence="1">Inner membrane-spanning protein YciB</fullName>
    </recommendedName>
</protein>
<sequence length="194" mass="22609">MQLFIEYFPLLIFFIINSIAGIYWATGSLIVAAFVQIFYYKIKKEKIPAKQWIIFGLIVVFGGLTIYLQNDAFLKWKVTIINAFFAAALLVSNTFFNKNIIKEFLAESLSLPENIWSRLNLAWALFFLFCSGLNYYIAFNYDLDTWVNFKVFGLTGLMFLFSITSILFLYKYLEVEEEINDTDTINNEKTKEST</sequence>
<reference key="1">
    <citation type="journal article" date="2005" name="Proc. Natl. Acad. Sci. U.S.A.">
        <title>The psychrophilic lifestyle as revealed by the genome sequence of Colwellia psychrerythraea 34H through genomic and proteomic analyses.</title>
        <authorList>
            <person name="Methe B.A."/>
            <person name="Nelson K.E."/>
            <person name="Deming J.W."/>
            <person name="Momen B."/>
            <person name="Melamud E."/>
            <person name="Zhang X."/>
            <person name="Moult J."/>
            <person name="Madupu R."/>
            <person name="Nelson W.C."/>
            <person name="Dodson R.J."/>
            <person name="Brinkac L.M."/>
            <person name="Daugherty S.C."/>
            <person name="Durkin A.S."/>
            <person name="DeBoy R.T."/>
            <person name="Kolonay J.F."/>
            <person name="Sullivan S.A."/>
            <person name="Zhou L."/>
            <person name="Davidsen T.M."/>
            <person name="Wu M."/>
            <person name="Huston A.L."/>
            <person name="Lewis M."/>
            <person name="Weaver B."/>
            <person name="Weidman J.F."/>
            <person name="Khouri H."/>
            <person name="Utterback T.R."/>
            <person name="Feldblyum T.V."/>
            <person name="Fraser C.M."/>
        </authorList>
    </citation>
    <scope>NUCLEOTIDE SEQUENCE [LARGE SCALE GENOMIC DNA]</scope>
    <source>
        <strain>34H / ATCC BAA-681</strain>
    </source>
</reference>
<keyword id="KW-0997">Cell inner membrane</keyword>
<keyword id="KW-1003">Cell membrane</keyword>
<keyword id="KW-0472">Membrane</keyword>
<keyword id="KW-0812">Transmembrane</keyword>
<keyword id="KW-1133">Transmembrane helix</keyword>
<accession>Q482I0</accession>
<name>YCIB_COLP3</name>
<organism>
    <name type="scientific">Colwellia psychrerythraea (strain 34H / ATCC BAA-681)</name>
    <name type="common">Vibrio psychroerythus</name>
    <dbReference type="NCBI Taxonomy" id="167879"/>
    <lineage>
        <taxon>Bacteria</taxon>
        <taxon>Pseudomonadati</taxon>
        <taxon>Pseudomonadota</taxon>
        <taxon>Gammaproteobacteria</taxon>
        <taxon>Alteromonadales</taxon>
        <taxon>Colwelliaceae</taxon>
        <taxon>Colwellia</taxon>
    </lineage>
</organism>
<feature type="chain" id="PRO_1000021006" description="Inner membrane-spanning protein YciB">
    <location>
        <begin position="1"/>
        <end position="194"/>
    </location>
</feature>
<feature type="transmembrane region" description="Helical" evidence="1">
    <location>
        <begin position="3"/>
        <end position="23"/>
    </location>
</feature>
<feature type="transmembrane region" description="Helical" evidence="1">
    <location>
        <begin position="47"/>
        <end position="67"/>
    </location>
</feature>
<feature type="transmembrane region" description="Helical" evidence="1">
    <location>
        <begin position="76"/>
        <end position="96"/>
    </location>
</feature>
<feature type="transmembrane region" description="Helical" evidence="1">
    <location>
        <begin position="119"/>
        <end position="139"/>
    </location>
</feature>
<feature type="transmembrane region" description="Helical" evidence="1">
    <location>
        <begin position="149"/>
        <end position="169"/>
    </location>
</feature>
<dbReference type="EMBL" id="CP000083">
    <property type="protein sequence ID" value="AAZ27662.1"/>
    <property type="molecule type" value="Genomic_DNA"/>
</dbReference>
<dbReference type="RefSeq" id="WP_011043131.1">
    <property type="nucleotide sequence ID" value="NC_003910.7"/>
</dbReference>
<dbReference type="STRING" id="167879.CPS_2317"/>
<dbReference type="KEGG" id="cps:CPS_2317"/>
<dbReference type="HOGENOM" id="CLU_089554_2_0_6"/>
<dbReference type="Proteomes" id="UP000000547">
    <property type="component" value="Chromosome"/>
</dbReference>
<dbReference type="GO" id="GO:0005886">
    <property type="term" value="C:plasma membrane"/>
    <property type="evidence" value="ECO:0007669"/>
    <property type="project" value="UniProtKB-SubCell"/>
</dbReference>
<dbReference type="HAMAP" id="MF_00189">
    <property type="entry name" value="YciB"/>
    <property type="match status" value="1"/>
</dbReference>
<dbReference type="InterPro" id="IPR006008">
    <property type="entry name" value="YciB"/>
</dbReference>
<dbReference type="NCBIfam" id="TIGR00997">
    <property type="entry name" value="ispZ"/>
    <property type="match status" value="1"/>
</dbReference>
<dbReference type="NCBIfam" id="NF001324">
    <property type="entry name" value="PRK00259.1-2"/>
    <property type="match status" value="1"/>
</dbReference>
<dbReference type="NCBIfam" id="NF001325">
    <property type="entry name" value="PRK00259.1-3"/>
    <property type="match status" value="1"/>
</dbReference>
<dbReference type="PANTHER" id="PTHR36917:SF1">
    <property type="entry name" value="INNER MEMBRANE-SPANNING PROTEIN YCIB"/>
    <property type="match status" value="1"/>
</dbReference>
<dbReference type="PANTHER" id="PTHR36917">
    <property type="entry name" value="INTRACELLULAR SEPTATION PROTEIN A-RELATED"/>
    <property type="match status" value="1"/>
</dbReference>
<dbReference type="Pfam" id="PF04279">
    <property type="entry name" value="IspA"/>
    <property type="match status" value="1"/>
</dbReference>
<comment type="function">
    <text evidence="1">Plays a role in cell envelope biogenesis, maintenance of cell envelope integrity and membrane homeostasis.</text>
</comment>
<comment type="subcellular location">
    <subcellularLocation>
        <location evidence="1">Cell inner membrane</location>
        <topology evidence="1">Multi-pass membrane protein</topology>
    </subcellularLocation>
</comment>
<comment type="similarity">
    <text evidence="1">Belongs to the YciB family.</text>
</comment>
<gene>
    <name evidence="1" type="primary">yciB</name>
    <name type="ordered locus">CPS_2317</name>
</gene>